<comment type="function">
    <text evidence="1">Core subunit of the mitochondrial membrane respiratory chain NADH dehydrogenase (Complex I) which catalyzes electron transfer from NADH through the respiratory chain, using ubiquinone as an electron acceptor. Essential for the catalytic activity of complex I.</text>
</comment>
<comment type="catalytic activity">
    <reaction evidence="1">
        <text>a ubiquinone + NADH + 5 H(+)(in) = a ubiquinol + NAD(+) + 4 H(+)(out)</text>
        <dbReference type="Rhea" id="RHEA:29091"/>
        <dbReference type="Rhea" id="RHEA-COMP:9565"/>
        <dbReference type="Rhea" id="RHEA-COMP:9566"/>
        <dbReference type="ChEBI" id="CHEBI:15378"/>
        <dbReference type="ChEBI" id="CHEBI:16389"/>
        <dbReference type="ChEBI" id="CHEBI:17976"/>
        <dbReference type="ChEBI" id="CHEBI:57540"/>
        <dbReference type="ChEBI" id="CHEBI:57945"/>
        <dbReference type="EC" id="7.1.1.2"/>
    </reaction>
</comment>
<comment type="subunit">
    <text evidence="1">Core subunit of respiratory chain NADH dehydrogenase (Complex I) which is composed of 45 different subunits. Interacts with TMEM186. Interacts with TMEM242 (By similarity).</text>
</comment>
<comment type="subcellular location">
    <subcellularLocation>
        <location evidence="2">Mitochondrion inner membrane</location>
        <topology evidence="3">Multi-pass membrane protein</topology>
    </subcellularLocation>
</comment>
<comment type="similarity">
    <text evidence="4">Belongs to the complex I subunit 3 family.</text>
</comment>
<evidence type="ECO:0000250" key="1">
    <source>
        <dbReference type="UniProtKB" id="P03897"/>
    </source>
</evidence>
<evidence type="ECO:0000250" key="2">
    <source>
        <dbReference type="UniProtKB" id="P03898"/>
    </source>
</evidence>
<evidence type="ECO:0000255" key="3"/>
<evidence type="ECO:0000305" key="4"/>
<name>NU3M_REIME</name>
<sequence>MNMFIVLLVNISLASCLILIAFWLPQLNIYTEKANPYECGFDPMSSARLPFSMKFFLVAITFLLFDLEIALLLPLPWAIQMSNIKATMLTSFILVSVLAMGLAYEWLQKGLEWTE</sequence>
<dbReference type="EC" id="7.1.1.2" evidence="1"/>
<dbReference type="EMBL" id="U83831">
    <property type="protein sequence ID" value="AAB87235.1"/>
    <property type="molecule type" value="Genomic_DNA"/>
</dbReference>
<dbReference type="SMR" id="O21590"/>
<dbReference type="GO" id="GO:0005743">
    <property type="term" value="C:mitochondrial inner membrane"/>
    <property type="evidence" value="ECO:0000250"/>
    <property type="project" value="UniProtKB"/>
</dbReference>
<dbReference type="GO" id="GO:0030964">
    <property type="term" value="C:NADH dehydrogenase complex"/>
    <property type="evidence" value="ECO:0007669"/>
    <property type="project" value="TreeGrafter"/>
</dbReference>
<dbReference type="GO" id="GO:0008137">
    <property type="term" value="F:NADH dehydrogenase (ubiquinone) activity"/>
    <property type="evidence" value="ECO:0000250"/>
    <property type="project" value="UniProtKB"/>
</dbReference>
<dbReference type="GO" id="GO:0006120">
    <property type="term" value="P:mitochondrial electron transport, NADH to ubiquinone"/>
    <property type="evidence" value="ECO:0000250"/>
    <property type="project" value="UniProtKB"/>
</dbReference>
<dbReference type="FunFam" id="1.20.58.1610:FF:000004">
    <property type="entry name" value="NADH-quinone oxidoreductase subunit A"/>
    <property type="match status" value="1"/>
</dbReference>
<dbReference type="Gene3D" id="1.20.58.1610">
    <property type="entry name" value="NADH:ubiquinone/plastoquinone oxidoreductase, chain 3"/>
    <property type="match status" value="1"/>
</dbReference>
<dbReference type="InterPro" id="IPR000440">
    <property type="entry name" value="NADH_UbQ/plastoQ_OxRdtase_su3"/>
</dbReference>
<dbReference type="InterPro" id="IPR038430">
    <property type="entry name" value="NDAH_ubi_oxred_su3_sf"/>
</dbReference>
<dbReference type="PANTHER" id="PTHR11058">
    <property type="entry name" value="NADH-UBIQUINONE OXIDOREDUCTASE CHAIN 3"/>
    <property type="match status" value="1"/>
</dbReference>
<dbReference type="PANTHER" id="PTHR11058:SF9">
    <property type="entry name" value="NADH-UBIQUINONE OXIDOREDUCTASE CHAIN 3"/>
    <property type="match status" value="1"/>
</dbReference>
<dbReference type="Pfam" id="PF00507">
    <property type="entry name" value="Oxidored_q4"/>
    <property type="match status" value="1"/>
</dbReference>
<geneLocation type="mitochondrion"/>
<reference key="1">
    <citation type="journal article" date="1998" name="Mol. Biol. Evol.">
        <title>Molecular systematics and paleobiogeography of the South American sigmodontine rodents.</title>
        <authorList>
            <person name="Engel S.R."/>
            <person name="Hogan K.M."/>
            <person name="Taylor J.F."/>
            <person name="Davis S.K."/>
        </authorList>
    </citation>
    <scope>NUCLEOTIDE SEQUENCE [GENOMIC DNA]</scope>
</reference>
<proteinExistence type="inferred from homology"/>
<accession>O21590</accession>
<feature type="chain" id="PRO_0000117822" description="NADH-ubiquinone oxidoreductase chain 3">
    <location>
        <begin position="1"/>
        <end position="115"/>
    </location>
</feature>
<feature type="transmembrane region" description="Helical" evidence="3">
    <location>
        <begin position="4"/>
        <end position="24"/>
    </location>
</feature>
<feature type="transmembrane region" description="Helical" evidence="3">
    <location>
        <begin position="55"/>
        <end position="75"/>
    </location>
</feature>
<feature type="transmembrane region" description="Helical" evidence="3">
    <location>
        <begin position="87"/>
        <end position="107"/>
    </location>
</feature>
<gene>
    <name evidence="1" type="primary">MT-ND3</name>
    <name type="synonym">MTND3</name>
    <name type="synonym">NADH3</name>
    <name type="synonym">ND3</name>
</gene>
<protein>
    <recommendedName>
        <fullName evidence="1">NADH-ubiquinone oxidoreductase chain 3</fullName>
        <ecNumber evidence="1">7.1.1.2</ecNumber>
    </recommendedName>
    <alternativeName>
        <fullName>NADH dehydrogenase subunit 3</fullName>
    </alternativeName>
</protein>
<organism>
    <name type="scientific">Reithrodontomys megalotis</name>
    <name type="common">Western harvest mouse</name>
    <name type="synonym">Reithrodon megalotis</name>
    <dbReference type="NCBI Taxonomy" id="44234"/>
    <lineage>
        <taxon>Eukaryota</taxon>
        <taxon>Metazoa</taxon>
        <taxon>Chordata</taxon>
        <taxon>Craniata</taxon>
        <taxon>Vertebrata</taxon>
        <taxon>Euteleostomi</taxon>
        <taxon>Mammalia</taxon>
        <taxon>Eutheria</taxon>
        <taxon>Euarchontoglires</taxon>
        <taxon>Glires</taxon>
        <taxon>Rodentia</taxon>
        <taxon>Myomorpha</taxon>
        <taxon>Muroidea</taxon>
        <taxon>Cricetidae</taxon>
        <taxon>Neotominae</taxon>
        <taxon>Reithrodontomys</taxon>
    </lineage>
</organism>
<keyword id="KW-0249">Electron transport</keyword>
<keyword id="KW-0472">Membrane</keyword>
<keyword id="KW-0496">Mitochondrion</keyword>
<keyword id="KW-0999">Mitochondrion inner membrane</keyword>
<keyword id="KW-0520">NAD</keyword>
<keyword id="KW-0679">Respiratory chain</keyword>
<keyword id="KW-1278">Translocase</keyword>
<keyword id="KW-0812">Transmembrane</keyword>
<keyword id="KW-1133">Transmembrane helix</keyword>
<keyword id="KW-0813">Transport</keyword>
<keyword id="KW-0830">Ubiquinone</keyword>